<accession>Q6PDM2</accession>
<accession>B2KGJ5</accession>
<accession>Q3UCH2</accession>
<accession>Q5SXC5</accession>
<accession>Q8BJV3</accession>
<accession>Q8C1H9</accession>
<dbReference type="EMBL" id="AK018176">
    <property type="protein sequence ID" value="BAC25546.1"/>
    <property type="molecule type" value="mRNA"/>
</dbReference>
<dbReference type="EMBL" id="AK078715">
    <property type="protein sequence ID" value="BAC37367.1"/>
    <property type="molecule type" value="mRNA"/>
</dbReference>
<dbReference type="EMBL" id="AK150535">
    <property type="protein sequence ID" value="BAE29641.1"/>
    <property type="molecule type" value="mRNA"/>
</dbReference>
<dbReference type="EMBL" id="AL593853">
    <property type="status" value="NOT_ANNOTATED_CDS"/>
    <property type="molecule type" value="Genomic_DNA"/>
</dbReference>
<dbReference type="EMBL" id="CU406964">
    <property type="status" value="NOT_ANNOTATED_CDS"/>
    <property type="molecule type" value="Genomic_DNA"/>
</dbReference>
<dbReference type="EMBL" id="BC046773">
    <property type="protein sequence ID" value="AAH46773.1"/>
    <property type="molecule type" value="mRNA"/>
</dbReference>
<dbReference type="EMBL" id="BC058627">
    <property type="protein sequence ID" value="AAH58627.1"/>
    <property type="molecule type" value="mRNA"/>
</dbReference>
<dbReference type="CCDS" id="CCDS36273.1">
    <molecule id="Q6PDM2-1"/>
</dbReference>
<dbReference type="CCDS" id="CCDS36274.1">
    <molecule id="Q6PDM2-2"/>
</dbReference>
<dbReference type="PIR" id="S26404">
    <property type="entry name" value="S26404"/>
</dbReference>
<dbReference type="RefSeq" id="NP_001071635.1">
    <molecule id="Q6PDM2-2"/>
    <property type="nucleotide sequence ID" value="NM_001078167.2"/>
</dbReference>
<dbReference type="RefSeq" id="NP_775550.2">
    <molecule id="Q6PDM2-1"/>
    <property type="nucleotide sequence ID" value="NM_173374.4"/>
</dbReference>
<dbReference type="PDB" id="1X4C">
    <property type="method" value="NMR"/>
    <property type="chains" value="A=113-207"/>
</dbReference>
<dbReference type="PDBsum" id="1X4C"/>
<dbReference type="SMR" id="Q6PDM2"/>
<dbReference type="BioGRID" id="225922">
    <property type="interactions" value="108"/>
</dbReference>
<dbReference type="DIP" id="DIP-48723N"/>
<dbReference type="FunCoup" id="Q6PDM2">
    <property type="interactions" value="5214"/>
</dbReference>
<dbReference type="IntAct" id="Q6PDM2">
    <property type="interactions" value="81"/>
</dbReference>
<dbReference type="MINT" id="Q6PDM2"/>
<dbReference type="STRING" id="10090.ENSMUSP00000120595"/>
<dbReference type="GlyGen" id="Q6PDM2">
    <property type="glycosylation" value="1 site, 1 O-linked glycan (1 site)"/>
</dbReference>
<dbReference type="iPTMnet" id="Q6PDM2"/>
<dbReference type="PhosphoSitePlus" id="Q6PDM2"/>
<dbReference type="SwissPalm" id="Q6PDM2"/>
<dbReference type="jPOST" id="Q6PDM2"/>
<dbReference type="PaxDb" id="10090-ENSMUSP00000120595"/>
<dbReference type="PeptideAtlas" id="Q6PDM2"/>
<dbReference type="ProteomicsDB" id="257410">
    <molecule id="Q6PDM2-1"/>
</dbReference>
<dbReference type="ProteomicsDB" id="257411">
    <molecule id="Q6PDM2-2"/>
</dbReference>
<dbReference type="ProteomicsDB" id="257412">
    <molecule id="Q6PDM2-3"/>
</dbReference>
<dbReference type="Pumba" id="Q6PDM2"/>
<dbReference type="TopDownProteomics" id="Q6PDM2-1">
    <molecule id="Q6PDM2-1"/>
</dbReference>
<dbReference type="Antibodypedia" id="4585">
    <property type="antibodies" value="314 antibodies from 35 providers"/>
</dbReference>
<dbReference type="DNASU" id="110809"/>
<dbReference type="Ensembl" id="ENSMUST00000079866.11">
    <molecule id="Q6PDM2-2"/>
    <property type="protein sequence ID" value="ENSMUSP00000133517.2"/>
    <property type="gene ID" value="ENSMUSG00000018379.18"/>
</dbReference>
<dbReference type="Ensembl" id="ENSMUST00000139129.9">
    <molecule id="Q6PDM2-1"/>
    <property type="protein sequence ID" value="ENSMUSP00000120595.3"/>
    <property type="gene ID" value="ENSMUSG00000018379.18"/>
</dbReference>
<dbReference type="GeneID" id="110809"/>
<dbReference type="KEGG" id="mmu:110809"/>
<dbReference type="UCSC" id="uc007kvc.2">
    <molecule id="Q6PDM2-1"/>
    <property type="organism name" value="mouse"/>
</dbReference>
<dbReference type="UCSC" id="uc007kvd.2">
    <molecule id="Q6PDM2-2"/>
    <property type="organism name" value="mouse"/>
</dbReference>
<dbReference type="AGR" id="MGI:98283"/>
<dbReference type="CTD" id="6426"/>
<dbReference type="MGI" id="MGI:98283">
    <property type="gene designation" value="Srsf1"/>
</dbReference>
<dbReference type="VEuPathDB" id="HostDB:ENSMUSG00000018379"/>
<dbReference type="eggNOG" id="KOG0105">
    <property type="taxonomic scope" value="Eukaryota"/>
</dbReference>
<dbReference type="GeneTree" id="ENSGT00940000155585"/>
<dbReference type="HOGENOM" id="CLU_012062_34_0_1"/>
<dbReference type="InParanoid" id="Q6PDM2"/>
<dbReference type="OMA" id="PREPAYP"/>
<dbReference type="OrthoDB" id="86477at9989"/>
<dbReference type="PhylomeDB" id="Q6PDM2"/>
<dbReference type="TreeFam" id="TF106261"/>
<dbReference type="Reactome" id="R-MMU-159236">
    <property type="pathway name" value="Transport of Mature mRNA derived from an Intron-Containing Transcript"/>
</dbReference>
<dbReference type="Reactome" id="R-MMU-72163">
    <property type="pathway name" value="mRNA Splicing - Major Pathway"/>
</dbReference>
<dbReference type="Reactome" id="R-MMU-72165">
    <property type="pathway name" value="mRNA Splicing - Minor Pathway"/>
</dbReference>
<dbReference type="Reactome" id="R-MMU-72187">
    <property type="pathway name" value="mRNA 3'-end processing"/>
</dbReference>
<dbReference type="Reactome" id="R-MMU-72203">
    <property type="pathway name" value="Processing of Capped Intron-Containing Pre-mRNA"/>
</dbReference>
<dbReference type="Reactome" id="R-MMU-73856">
    <property type="pathway name" value="RNA Polymerase II Transcription Termination"/>
</dbReference>
<dbReference type="BioGRID-ORCS" id="110809">
    <property type="hits" value="29 hits in 78 CRISPR screens"/>
</dbReference>
<dbReference type="CD-CODE" id="DE1E139C">
    <property type="entry name" value="Chromatoid body"/>
</dbReference>
<dbReference type="ChiTaRS" id="Srsf1">
    <property type="organism name" value="mouse"/>
</dbReference>
<dbReference type="EvolutionaryTrace" id="Q6PDM2"/>
<dbReference type="PRO" id="PR:Q6PDM2"/>
<dbReference type="Proteomes" id="UP000000589">
    <property type="component" value="Chromosome 11"/>
</dbReference>
<dbReference type="RNAct" id="Q6PDM2">
    <property type="molecule type" value="protein"/>
</dbReference>
<dbReference type="Bgee" id="ENSMUSG00000018379">
    <property type="expression patterns" value="Expressed in retinal neural layer and 86 other cell types or tissues"/>
</dbReference>
<dbReference type="ExpressionAtlas" id="Q6PDM2">
    <property type="expression patterns" value="baseline and differential"/>
</dbReference>
<dbReference type="GO" id="GO:0071013">
    <property type="term" value="C:catalytic step 2 spliceosome"/>
    <property type="evidence" value="ECO:0007669"/>
    <property type="project" value="Ensembl"/>
</dbReference>
<dbReference type="GO" id="GO:0005737">
    <property type="term" value="C:cytoplasm"/>
    <property type="evidence" value="ECO:0000250"/>
    <property type="project" value="UniProtKB"/>
</dbReference>
<dbReference type="GO" id="GO:0035145">
    <property type="term" value="C:exon-exon junction complex"/>
    <property type="evidence" value="ECO:0007669"/>
    <property type="project" value="Ensembl"/>
</dbReference>
<dbReference type="GO" id="GO:0005635">
    <property type="term" value="C:nuclear envelope"/>
    <property type="evidence" value="ECO:0007669"/>
    <property type="project" value="Ensembl"/>
</dbReference>
<dbReference type="GO" id="GO:0016607">
    <property type="term" value="C:nuclear speck"/>
    <property type="evidence" value="ECO:0000314"/>
    <property type="project" value="MGI"/>
</dbReference>
<dbReference type="GO" id="GO:0005654">
    <property type="term" value="C:nucleoplasm"/>
    <property type="evidence" value="ECO:0000250"/>
    <property type="project" value="UniProtKB"/>
</dbReference>
<dbReference type="GO" id="GO:0005634">
    <property type="term" value="C:nucleus"/>
    <property type="evidence" value="ECO:0000314"/>
    <property type="project" value="UniProtKB"/>
</dbReference>
<dbReference type="GO" id="GO:0044547">
    <property type="term" value="F:DNA topoisomerase binding"/>
    <property type="evidence" value="ECO:0007669"/>
    <property type="project" value="Ensembl"/>
</dbReference>
<dbReference type="GO" id="GO:0003729">
    <property type="term" value="F:mRNA binding"/>
    <property type="evidence" value="ECO:0000315"/>
    <property type="project" value="MGI"/>
</dbReference>
<dbReference type="GO" id="GO:0043422">
    <property type="term" value="F:protein kinase B binding"/>
    <property type="evidence" value="ECO:0007669"/>
    <property type="project" value="Ensembl"/>
</dbReference>
<dbReference type="GO" id="GO:0003723">
    <property type="term" value="F:RNA binding"/>
    <property type="evidence" value="ECO:0000250"/>
    <property type="project" value="UniProtKB"/>
</dbReference>
<dbReference type="GO" id="GO:0050733">
    <property type="term" value="F:RS domain binding"/>
    <property type="evidence" value="ECO:0000353"/>
    <property type="project" value="MGI"/>
</dbReference>
<dbReference type="GO" id="GO:0000380">
    <property type="term" value="P:alternative mRNA splicing, via spliceosome"/>
    <property type="evidence" value="ECO:0007669"/>
    <property type="project" value="Ensembl"/>
</dbReference>
<dbReference type="GO" id="GO:0060048">
    <property type="term" value="P:cardiac muscle contraction"/>
    <property type="evidence" value="ECO:0000316"/>
    <property type="project" value="MGI"/>
</dbReference>
<dbReference type="GO" id="GO:0097398">
    <property type="term" value="P:cellular response to interleukin-17"/>
    <property type="evidence" value="ECO:0000314"/>
    <property type="project" value="MGI"/>
</dbReference>
<dbReference type="GO" id="GO:0001701">
    <property type="term" value="P:in utero embryonic development"/>
    <property type="evidence" value="ECO:0000315"/>
    <property type="project" value="MGI"/>
</dbReference>
<dbReference type="GO" id="GO:0097400">
    <property type="term" value="P:interleukin-17-mediated signaling pathway"/>
    <property type="evidence" value="ECO:0000314"/>
    <property type="project" value="MGI"/>
</dbReference>
<dbReference type="GO" id="GO:0097421">
    <property type="term" value="P:liver regeneration"/>
    <property type="evidence" value="ECO:0007669"/>
    <property type="project" value="Ensembl"/>
</dbReference>
<dbReference type="GO" id="GO:0000395">
    <property type="term" value="P:mRNA 5'-splice site recognition"/>
    <property type="evidence" value="ECO:0000250"/>
    <property type="project" value="UniProtKB"/>
</dbReference>
<dbReference type="GO" id="GO:0048255">
    <property type="term" value="P:mRNA stabilization"/>
    <property type="evidence" value="ECO:0000314"/>
    <property type="project" value="MGI"/>
</dbReference>
<dbReference type="GO" id="GO:0051028">
    <property type="term" value="P:mRNA transport"/>
    <property type="evidence" value="ECO:0007669"/>
    <property type="project" value="UniProtKB-KW"/>
</dbReference>
<dbReference type="GO" id="GO:0048709">
    <property type="term" value="P:oligodendrocyte differentiation"/>
    <property type="evidence" value="ECO:0007669"/>
    <property type="project" value="Ensembl"/>
</dbReference>
<dbReference type="GO" id="GO:0033120">
    <property type="term" value="P:positive regulation of RNA splicing"/>
    <property type="evidence" value="ECO:0007669"/>
    <property type="project" value="Ensembl"/>
</dbReference>
<dbReference type="GO" id="GO:0034504">
    <property type="term" value="P:protein localization to nucleus"/>
    <property type="evidence" value="ECO:0000314"/>
    <property type="project" value="MGI"/>
</dbReference>
<dbReference type="GO" id="GO:0110012">
    <property type="term" value="P:protein localization to P-body"/>
    <property type="evidence" value="ECO:0000314"/>
    <property type="project" value="MGI"/>
</dbReference>
<dbReference type="GO" id="GO:0043484">
    <property type="term" value="P:regulation of RNA splicing"/>
    <property type="evidence" value="ECO:0000315"/>
    <property type="project" value="UniProtKB"/>
</dbReference>
<dbReference type="GO" id="GO:0008380">
    <property type="term" value="P:RNA splicing"/>
    <property type="evidence" value="ECO:0000314"/>
    <property type="project" value="MGI"/>
</dbReference>
<dbReference type="GO" id="GO:0023019">
    <property type="term" value="P:signal transduction involved in regulation of gene expression"/>
    <property type="evidence" value="ECO:0000314"/>
    <property type="project" value="MGI"/>
</dbReference>
<dbReference type="CDD" id="cd12597">
    <property type="entry name" value="RRM1_SRSF1"/>
    <property type="match status" value="1"/>
</dbReference>
<dbReference type="CDD" id="cd12767">
    <property type="entry name" value="RRM2_SRSF1"/>
    <property type="match status" value="1"/>
</dbReference>
<dbReference type="FunFam" id="3.30.70.330:FF:000053">
    <property type="entry name" value="Serine/arginine-rich splicing factor 1"/>
    <property type="match status" value="1"/>
</dbReference>
<dbReference type="FunFam" id="3.30.70.330:FF:000170">
    <property type="entry name" value="Serine/arginine-rich splicing factor 1"/>
    <property type="match status" value="1"/>
</dbReference>
<dbReference type="Gene3D" id="3.30.70.330">
    <property type="match status" value="2"/>
</dbReference>
<dbReference type="InterPro" id="IPR012677">
    <property type="entry name" value="Nucleotide-bd_a/b_plait_sf"/>
</dbReference>
<dbReference type="InterPro" id="IPR035979">
    <property type="entry name" value="RBD_domain_sf"/>
</dbReference>
<dbReference type="InterPro" id="IPR000504">
    <property type="entry name" value="RRM_dom"/>
</dbReference>
<dbReference type="InterPro" id="IPR050374">
    <property type="entry name" value="RRT5_SRSF_SR"/>
</dbReference>
<dbReference type="InterPro" id="IPR034520">
    <property type="entry name" value="SRSF1_RRM1"/>
</dbReference>
<dbReference type="InterPro" id="IPR029538">
    <property type="entry name" value="SRSF1_RRM2"/>
</dbReference>
<dbReference type="PANTHER" id="PTHR23003">
    <property type="entry name" value="RNA RECOGNITION MOTIF RRM DOMAIN CONTAINING PROTEIN"/>
    <property type="match status" value="1"/>
</dbReference>
<dbReference type="PANTHER" id="PTHR23003:SF66">
    <property type="entry name" value="SERINE_ARGININE-RICH SPLICING FACTOR 1"/>
    <property type="match status" value="1"/>
</dbReference>
<dbReference type="Pfam" id="PF00076">
    <property type="entry name" value="RRM_1"/>
    <property type="match status" value="2"/>
</dbReference>
<dbReference type="SMART" id="SM00360">
    <property type="entry name" value="RRM"/>
    <property type="match status" value="2"/>
</dbReference>
<dbReference type="SUPFAM" id="SSF54928">
    <property type="entry name" value="RNA-binding domain, RBD"/>
    <property type="match status" value="1"/>
</dbReference>
<dbReference type="PROSITE" id="PS50102">
    <property type="entry name" value="RRM"/>
    <property type="match status" value="2"/>
</dbReference>
<protein>
    <recommendedName>
        <fullName evidence="9">Serine/arginine-rich splicing factor 1</fullName>
    </recommendedName>
    <alternativeName>
        <fullName>ASF/SF2</fullName>
    </alternativeName>
    <alternativeName>
        <fullName>Pre-mRNA-splicing factor SRp30a</fullName>
    </alternativeName>
    <alternativeName>
        <fullName>Splicing factor, arginine/serine-rich 1</fullName>
    </alternativeName>
</protein>
<keyword id="KW-0002">3D-structure</keyword>
<keyword id="KW-0007">Acetylation</keyword>
<keyword id="KW-0025">Alternative splicing</keyword>
<keyword id="KW-0963">Cytoplasm</keyword>
<keyword id="KW-0903">Direct protein sequencing</keyword>
<keyword id="KW-1017">Isopeptide bond</keyword>
<keyword id="KW-0488">Methylation</keyword>
<keyword id="KW-0507">mRNA processing</keyword>
<keyword id="KW-0508">mRNA splicing</keyword>
<keyword id="KW-0509">mRNA transport</keyword>
<keyword id="KW-0539">Nucleus</keyword>
<keyword id="KW-0597">Phosphoprotein</keyword>
<keyword id="KW-1185">Reference proteome</keyword>
<keyword id="KW-0677">Repeat</keyword>
<keyword id="KW-0694">RNA-binding</keyword>
<keyword id="KW-0747">Spliceosome</keyword>
<keyword id="KW-0813">Transport</keyword>
<keyword id="KW-0832">Ubl conjugation</keyword>
<gene>
    <name evidence="10" type="primary">Srsf1</name>
    <name type="synonym">Sfrs1</name>
</gene>
<reference key="1">
    <citation type="journal article" date="2005" name="Science">
        <title>The transcriptional landscape of the mammalian genome.</title>
        <authorList>
            <person name="Carninci P."/>
            <person name="Kasukawa T."/>
            <person name="Katayama S."/>
            <person name="Gough J."/>
            <person name="Frith M.C."/>
            <person name="Maeda N."/>
            <person name="Oyama R."/>
            <person name="Ravasi T."/>
            <person name="Lenhard B."/>
            <person name="Wells C."/>
            <person name="Kodzius R."/>
            <person name="Shimokawa K."/>
            <person name="Bajic V.B."/>
            <person name="Brenner S.E."/>
            <person name="Batalov S."/>
            <person name="Forrest A.R."/>
            <person name="Zavolan M."/>
            <person name="Davis M.J."/>
            <person name="Wilming L.G."/>
            <person name="Aidinis V."/>
            <person name="Allen J.E."/>
            <person name="Ambesi-Impiombato A."/>
            <person name="Apweiler R."/>
            <person name="Aturaliya R.N."/>
            <person name="Bailey T.L."/>
            <person name="Bansal M."/>
            <person name="Baxter L."/>
            <person name="Beisel K.W."/>
            <person name="Bersano T."/>
            <person name="Bono H."/>
            <person name="Chalk A.M."/>
            <person name="Chiu K.P."/>
            <person name="Choudhary V."/>
            <person name="Christoffels A."/>
            <person name="Clutterbuck D.R."/>
            <person name="Crowe M.L."/>
            <person name="Dalla E."/>
            <person name="Dalrymple B.P."/>
            <person name="de Bono B."/>
            <person name="Della Gatta G."/>
            <person name="di Bernardo D."/>
            <person name="Down T."/>
            <person name="Engstrom P."/>
            <person name="Fagiolini M."/>
            <person name="Faulkner G."/>
            <person name="Fletcher C.F."/>
            <person name="Fukushima T."/>
            <person name="Furuno M."/>
            <person name="Futaki S."/>
            <person name="Gariboldi M."/>
            <person name="Georgii-Hemming P."/>
            <person name="Gingeras T.R."/>
            <person name="Gojobori T."/>
            <person name="Green R.E."/>
            <person name="Gustincich S."/>
            <person name="Harbers M."/>
            <person name="Hayashi Y."/>
            <person name="Hensch T.K."/>
            <person name="Hirokawa N."/>
            <person name="Hill D."/>
            <person name="Huminiecki L."/>
            <person name="Iacono M."/>
            <person name="Ikeo K."/>
            <person name="Iwama A."/>
            <person name="Ishikawa T."/>
            <person name="Jakt M."/>
            <person name="Kanapin A."/>
            <person name="Katoh M."/>
            <person name="Kawasawa Y."/>
            <person name="Kelso J."/>
            <person name="Kitamura H."/>
            <person name="Kitano H."/>
            <person name="Kollias G."/>
            <person name="Krishnan S.P."/>
            <person name="Kruger A."/>
            <person name="Kummerfeld S.K."/>
            <person name="Kurochkin I.V."/>
            <person name="Lareau L.F."/>
            <person name="Lazarevic D."/>
            <person name="Lipovich L."/>
            <person name="Liu J."/>
            <person name="Liuni S."/>
            <person name="McWilliam S."/>
            <person name="Madan Babu M."/>
            <person name="Madera M."/>
            <person name="Marchionni L."/>
            <person name="Matsuda H."/>
            <person name="Matsuzawa S."/>
            <person name="Miki H."/>
            <person name="Mignone F."/>
            <person name="Miyake S."/>
            <person name="Morris K."/>
            <person name="Mottagui-Tabar S."/>
            <person name="Mulder N."/>
            <person name="Nakano N."/>
            <person name="Nakauchi H."/>
            <person name="Ng P."/>
            <person name="Nilsson R."/>
            <person name="Nishiguchi S."/>
            <person name="Nishikawa S."/>
            <person name="Nori F."/>
            <person name="Ohara O."/>
            <person name="Okazaki Y."/>
            <person name="Orlando V."/>
            <person name="Pang K.C."/>
            <person name="Pavan W.J."/>
            <person name="Pavesi G."/>
            <person name="Pesole G."/>
            <person name="Petrovsky N."/>
            <person name="Piazza S."/>
            <person name="Reed J."/>
            <person name="Reid J.F."/>
            <person name="Ring B.Z."/>
            <person name="Ringwald M."/>
            <person name="Rost B."/>
            <person name="Ruan Y."/>
            <person name="Salzberg S.L."/>
            <person name="Sandelin A."/>
            <person name="Schneider C."/>
            <person name="Schoenbach C."/>
            <person name="Sekiguchi K."/>
            <person name="Semple C.A."/>
            <person name="Seno S."/>
            <person name="Sessa L."/>
            <person name="Sheng Y."/>
            <person name="Shibata Y."/>
            <person name="Shimada H."/>
            <person name="Shimada K."/>
            <person name="Silva D."/>
            <person name="Sinclair B."/>
            <person name="Sperling S."/>
            <person name="Stupka E."/>
            <person name="Sugiura K."/>
            <person name="Sultana R."/>
            <person name="Takenaka Y."/>
            <person name="Taki K."/>
            <person name="Tammoja K."/>
            <person name="Tan S.L."/>
            <person name="Tang S."/>
            <person name="Taylor M.S."/>
            <person name="Tegner J."/>
            <person name="Teichmann S.A."/>
            <person name="Ueda H.R."/>
            <person name="van Nimwegen E."/>
            <person name="Verardo R."/>
            <person name="Wei C.L."/>
            <person name="Yagi K."/>
            <person name="Yamanishi H."/>
            <person name="Zabarovsky E."/>
            <person name="Zhu S."/>
            <person name="Zimmer A."/>
            <person name="Hide W."/>
            <person name="Bult C."/>
            <person name="Grimmond S.M."/>
            <person name="Teasdale R.D."/>
            <person name="Liu E.T."/>
            <person name="Brusic V."/>
            <person name="Quackenbush J."/>
            <person name="Wahlestedt C."/>
            <person name="Mattick J.S."/>
            <person name="Hume D.A."/>
            <person name="Kai C."/>
            <person name="Sasaki D."/>
            <person name="Tomaru Y."/>
            <person name="Fukuda S."/>
            <person name="Kanamori-Katayama M."/>
            <person name="Suzuki M."/>
            <person name="Aoki J."/>
            <person name="Arakawa T."/>
            <person name="Iida J."/>
            <person name="Imamura K."/>
            <person name="Itoh M."/>
            <person name="Kato T."/>
            <person name="Kawaji H."/>
            <person name="Kawagashira N."/>
            <person name="Kawashima T."/>
            <person name="Kojima M."/>
            <person name="Kondo S."/>
            <person name="Konno H."/>
            <person name="Nakano K."/>
            <person name="Ninomiya N."/>
            <person name="Nishio T."/>
            <person name="Okada M."/>
            <person name="Plessy C."/>
            <person name="Shibata K."/>
            <person name="Shiraki T."/>
            <person name="Suzuki S."/>
            <person name="Tagami M."/>
            <person name="Waki K."/>
            <person name="Watahiki A."/>
            <person name="Okamura-Oho Y."/>
            <person name="Suzuki H."/>
            <person name="Kawai J."/>
            <person name="Hayashizaki Y."/>
        </authorList>
    </citation>
    <scope>NUCLEOTIDE SEQUENCE [LARGE SCALE MRNA] (ISOFORMS 1 AND 2)</scope>
    <source>
        <strain>C57BL/6J</strain>
        <tissue>Bone marrow macrophage</tissue>
        <tissue>Eye</tissue>
        <tissue>Medulla oblongata</tissue>
    </source>
</reference>
<reference key="2">
    <citation type="journal article" date="2009" name="PLoS Biol.">
        <title>Lineage-specific biology revealed by a finished genome assembly of the mouse.</title>
        <authorList>
            <person name="Church D.M."/>
            <person name="Goodstadt L."/>
            <person name="Hillier L.W."/>
            <person name="Zody M.C."/>
            <person name="Goldstein S."/>
            <person name="She X."/>
            <person name="Bult C.J."/>
            <person name="Agarwala R."/>
            <person name="Cherry J.L."/>
            <person name="DiCuccio M."/>
            <person name="Hlavina W."/>
            <person name="Kapustin Y."/>
            <person name="Meric P."/>
            <person name="Maglott D."/>
            <person name="Birtle Z."/>
            <person name="Marques A.C."/>
            <person name="Graves T."/>
            <person name="Zhou S."/>
            <person name="Teague B."/>
            <person name="Potamousis K."/>
            <person name="Churas C."/>
            <person name="Place M."/>
            <person name="Herschleb J."/>
            <person name="Runnheim R."/>
            <person name="Forrest D."/>
            <person name="Amos-Landgraf J."/>
            <person name="Schwartz D.C."/>
            <person name="Cheng Z."/>
            <person name="Lindblad-Toh K."/>
            <person name="Eichler E.E."/>
            <person name="Ponting C.P."/>
        </authorList>
    </citation>
    <scope>NUCLEOTIDE SEQUENCE [LARGE SCALE GENOMIC DNA]</scope>
    <source>
        <strain>C57BL/6J</strain>
    </source>
</reference>
<reference key="3">
    <citation type="journal article" date="2004" name="Genome Res.">
        <title>The status, quality, and expansion of the NIH full-length cDNA project: the Mammalian Gene Collection (MGC).</title>
        <authorList>
            <consortium name="The MGC Project Team"/>
        </authorList>
    </citation>
    <scope>NUCLEOTIDE SEQUENCE [LARGE SCALE MRNA] (ISOFORM 1)</scope>
    <source>
        <strain>C57BL/6J</strain>
        <tissue>Embryonic brain</tissue>
    </source>
</reference>
<reference key="4">
    <citation type="submission" date="2007-07" db="UniProtKB">
        <authorList>
            <person name="Lubec G."/>
            <person name="Yang J.W."/>
            <person name="Zigmond M."/>
        </authorList>
    </citation>
    <scope>PROTEIN SEQUENCE OF 18-28</scope>
    <source>
        <tissue>Brain</tissue>
    </source>
</reference>
<reference key="5">
    <citation type="journal article" date="1997" name="Biochem. J.">
        <title>Characterization and comparison of four serine- and arginine-rich (SR) protein kinases.</title>
        <authorList>
            <person name="Nayler O."/>
            <person name="Stamm S."/>
            <person name="Ullrich A."/>
        </authorList>
    </citation>
    <scope>PHOSPHORYLATION BY CLK1; CLK2; CLK3 AND CLK4</scope>
</reference>
<reference key="6">
    <citation type="journal article" date="2005" name="Cell">
        <title>ASF/SF2-regulated CaMKIIdelta alternative splicing temporally reprograms excitation-contraction coupling in cardiac muscle.</title>
        <authorList>
            <person name="Xu X."/>
            <person name="Yang D."/>
            <person name="Ding J.-H."/>
            <person name="Wang W."/>
            <person name="Chu P.-H."/>
            <person name="Dalton N.D."/>
            <person name="Wang H.-Y."/>
            <person name="Bermingham J.R. Jr."/>
            <person name="Ye Z."/>
            <person name="Liu F."/>
            <person name="Rosenfeld M.G."/>
            <person name="Manley J.L."/>
            <person name="Ross J. Jr."/>
            <person name="Chen J."/>
            <person name="Xiao R.-P."/>
            <person name="Cheng H."/>
            <person name="Fu X.-D."/>
        </authorList>
    </citation>
    <scope>FUNCTION</scope>
</reference>
<reference key="7">
    <citation type="journal article" date="2009" name="Mol. Cell. Proteomics">
        <title>Large scale localization of protein phosphorylation by use of electron capture dissociation mass spectrometry.</title>
        <authorList>
            <person name="Sweet S.M."/>
            <person name="Bailey C.M."/>
            <person name="Cunningham D.L."/>
            <person name="Heath J.K."/>
            <person name="Cooper H.J."/>
        </authorList>
    </citation>
    <scope>PHOSPHORYLATION [LARGE SCALE ANALYSIS] AT SER-199 AND SER-201</scope>
    <scope>IDENTIFICATION BY MASS SPECTROMETRY [LARGE SCALE ANALYSIS]</scope>
    <source>
        <tissue>Embryonic fibroblast</tissue>
    </source>
</reference>
<reference key="8">
    <citation type="journal article" date="2010" name="Cell">
        <title>A tissue-specific atlas of mouse protein phosphorylation and expression.</title>
        <authorList>
            <person name="Huttlin E.L."/>
            <person name="Jedrychowski M.P."/>
            <person name="Elias J.E."/>
            <person name="Goswami T."/>
            <person name="Rad R."/>
            <person name="Beausoleil S.A."/>
            <person name="Villen J."/>
            <person name="Haas W."/>
            <person name="Sowa M.E."/>
            <person name="Gygi S.P."/>
        </authorList>
    </citation>
    <scope>IDENTIFICATION BY MASS SPECTROMETRY [LARGE SCALE ANALYSIS]</scope>
    <source>
        <tissue>Brown adipose tissue</tissue>
        <tissue>Kidney</tissue>
        <tissue>Lung</tissue>
        <tissue>Pancreas</tissue>
        <tissue>Spleen</tissue>
    </source>
</reference>
<reference key="9">
    <citation type="journal article" date="2014" name="Mol. Cell. Proteomics">
        <title>Immunoaffinity enrichment and mass spectrometry analysis of protein methylation.</title>
        <authorList>
            <person name="Guo A."/>
            <person name="Gu H."/>
            <person name="Zhou J."/>
            <person name="Mulhern D."/>
            <person name="Wang Y."/>
            <person name="Lee K.A."/>
            <person name="Yang V."/>
            <person name="Aguiar M."/>
            <person name="Kornhauser J."/>
            <person name="Jia X."/>
            <person name="Ren J."/>
            <person name="Beausoleil S.A."/>
            <person name="Silva J.C."/>
            <person name="Vemulapalli V."/>
            <person name="Bedford M.T."/>
            <person name="Comb M.J."/>
        </authorList>
    </citation>
    <scope>METHYLATION [LARGE SCALE ANALYSIS] AT ARG-93; ARG-97 AND ARG-109</scope>
    <scope>IDENTIFICATION BY MASS SPECTROMETRY [LARGE SCALE ANALYSIS]</scope>
    <source>
        <tissue>Brain</tissue>
        <tissue>Embryo</tissue>
    </source>
</reference>
<reference key="10">
    <citation type="journal article" date="2017" name="Sci. Rep.">
        <title>Angulin proteins ILDR1 and ILDR2 regulate alternative pre-mRNA splicing through binding to splicing factors TRA2A, TRA2B, or SRSF1.</title>
        <authorList>
            <person name="Liu Y."/>
            <person name="Nie H."/>
            <person name="Liu C."/>
            <person name="Zhai X."/>
            <person name="Sang Q."/>
            <person name="Wang Y."/>
            <person name="Shi D."/>
            <person name="Wang L."/>
            <person name="Xu Z."/>
        </authorList>
    </citation>
    <scope>FUNCTION</scope>
    <scope>INTERACTION WITH ILDR1 AND ILDR2</scope>
    <scope>SUBCELLULAR LOCATION</scope>
    <scope>TISSUE SPECIFICITY</scope>
</reference>
<reference key="11">
    <citation type="submission" date="2005-11" db="PDB data bank">
        <title>Solution structure of RRM domain in splicing factor 2.</title>
        <authorList>
            <consortium name="RIKEN structural genomics initiative (RSGI)"/>
        </authorList>
    </citation>
    <scope>STRUCTURE BY NMR OF 113-207</scope>
</reference>
<evidence type="ECO:0000250" key="1"/>
<evidence type="ECO:0000250" key="2">
    <source>
        <dbReference type="UniProtKB" id="Q07955"/>
    </source>
</evidence>
<evidence type="ECO:0000255" key="3"/>
<evidence type="ECO:0000255" key="4">
    <source>
        <dbReference type="PROSITE-ProRule" id="PRU00176"/>
    </source>
</evidence>
<evidence type="ECO:0000256" key="5">
    <source>
        <dbReference type="SAM" id="MobiDB-lite"/>
    </source>
</evidence>
<evidence type="ECO:0000269" key="6">
    <source>
    </source>
</evidence>
<evidence type="ECO:0000269" key="7">
    <source>
    </source>
</evidence>
<evidence type="ECO:0000303" key="8">
    <source>
    </source>
</evidence>
<evidence type="ECO:0000305" key="9"/>
<evidence type="ECO:0000312" key="10">
    <source>
        <dbReference type="MGI" id="MGI:98283"/>
    </source>
</evidence>
<evidence type="ECO:0007744" key="11">
    <source>
    </source>
</evidence>
<evidence type="ECO:0007744" key="12">
    <source>
    </source>
</evidence>
<evidence type="ECO:0007829" key="13">
    <source>
        <dbReference type="PDB" id="1X4C"/>
    </source>
</evidence>
<feature type="initiator methionine" description="Removed" evidence="2">
    <location>
        <position position="1"/>
    </location>
</feature>
<feature type="chain" id="PRO_0000081912" description="Serine/arginine-rich splicing factor 1">
    <location>
        <begin position="2"/>
        <end position="248"/>
    </location>
</feature>
<feature type="domain" description="RRM 1" evidence="4">
    <location>
        <begin position="16"/>
        <end position="91"/>
    </location>
</feature>
<feature type="domain" description="RRM 2" evidence="4">
    <location>
        <begin position="121"/>
        <end position="195"/>
    </location>
</feature>
<feature type="region of interest" description="Disordered" evidence="5">
    <location>
        <begin position="88"/>
        <end position="134"/>
    </location>
</feature>
<feature type="region of interest" description="Disordered" evidence="5">
    <location>
        <begin position="191"/>
        <end position="248"/>
    </location>
</feature>
<feature type="region of interest" description="Interaction with SAFB1" evidence="1">
    <location>
        <begin position="198"/>
        <end position="247"/>
    </location>
</feature>
<feature type="compositionally biased region" description="Gly residues" evidence="5">
    <location>
        <begin position="93"/>
        <end position="108"/>
    </location>
</feature>
<feature type="compositionally biased region" description="Basic residues" evidence="5">
    <location>
        <begin position="205"/>
        <end position="248"/>
    </location>
</feature>
<feature type="modified residue" description="N-acetylserine" evidence="2 3">
    <location>
        <position position="2"/>
    </location>
</feature>
<feature type="modified residue" description="Phosphoserine" evidence="2">
    <location>
        <position position="2"/>
    </location>
</feature>
<feature type="modified residue" description="N6-acetyllysine; alternate" evidence="2">
    <location>
        <position position="38"/>
    </location>
</feature>
<feature type="modified residue" description="Asymmetric dimethylarginine; alternate" evidence="2">
    <location>
        <position position="93"/>
    </location>
</feature>
<feature type="modified residue" description="Omega-N-methylarginine; alternate" evidence="12">
    <location>
        <position position="93"/>
    </location>
</feature>
<feature type="modified residue" description="Asymmetric dimethylarginine; alternate" evidence="2">
    <location>
        <position position="97"/>
    </location>
</feature>
<feature type="modified residue" description="Omega-N-methylarginine; alternate" evidence="12">
    <location>
        <position position="97"/>
    </location>
</feature>
<feature type="modified residue" description="Asymmetric dimethylarginine; alternate" evidence="2">
    <location>
        <position position="109"/>
    </location>
</feature>
<feature type="modified residue" description="Omega-N-methylarginine; alternate" evidence="12">
    <location>
        <position position="109"/>
    </location>
</feature>
<feature type="modified residue" description="Omega-N-methylarginine" evidence="2">
    <location>
        <position position="111"/>
    </location>
</feature>
<feature type="modified residue" description="Phosphoserine" evidence="2">
    <location>
        <position position="133"/>
    </location>
</feature>
<feature type="modified residue" description="N6-acetyllysine" evidence="2">
    <location>
        <position position="179"/>
    </location>
</feature>
<feature type="modified residue" description="Phosphoserine" evidence="11">
    <location>
        <position position="199"/>
    </location>
</feature>
<feature type="modified residue" description="Phosphoserine" evidence="11">
    <location>
        <position position="201"/>
    </location>
</feature>
<feature type="modified residue" description="Phosphotyrosine" evidence="2">
    <location>
        <position position="202"/>
    </location>
</feature>
<feature type="modified residue" description="Phosphoserine" evidence="2">
    <location>
        <position position="205"/>
    </location>
</feature>
<feature type="modified residue" description="Phosphoserine" evidence="2">
    <location>
        <position position="207"/>
    </location>
</feature>
<feature type="modified residue" description="Phosphoserine" evidence="2">
    <location>
        <position position="209"/>
    </location>
</feature>
<feature type="modified residue" description="Phosphoserine" evidence="2">
    <location>
        <position position="231"/>
    </location>
</feature>
<feature type="modified residue" description="Phosphoserine" evidence="2">
    <location>
        <position position="234"/>
    </location>
</feature>
<feature type="modified residue" description="Phosphoserine" evidence="2">
    <location>
        <position position="238"/>
    </location>
</feature>
<feature type="cross-link" description="Glycyl lysine isopeptide (Lys-Gly) (interchain with G-Cter in SUMO2)" evidence="2">
    <location>
        <position position="30"/>
    </location>
</feature>
<feature type="cross-link" description="Glycyl lysine isopeptide (Lys-Gly) (interchain with G-Cter in SUMO2); alternate" evidence="2">
    <location>
        <position position="38"/>
    </location>
</feature>
<feature type="splice variant" id="VSP_013770" description="In isoform 2." evidence="8">
    <original>GETAYIRVKVDGPRSPSYG</original>
    <variation>VGYTLILFFGQNWIQFS</variation>
    <location>
        <begin position="185"/>
        <end position="203"/>
    </location>
</feature>
<feature type="splice variant" id="VSP_013771" description="In isoform 3." evidence="9">
    <original>GETAYIRVKVDGPRS</original>
    <variation>TYLKRWIKNALD</variation>
    <location>
        <begin position="185"/>
        <end position="199"/>
    </location>
</feature>
<feature type="splice variant" id="VSP_013772" description="In isoform 3." evidence="9">
    <location>
        <begin position="200"/>
        <end position="248"/>
    </location>
</feature>
<feature type="splice variant" id="VSP_013773" description="In isoform 2." evidence="8">
    <location>
        <begin position="204"/>
        <end position="248"/>
    </location>
</feature>
<feature type="sequence conflict" description="In Ref. 1; BAC25546." evidence="9" ref="1">
    <original>S</original>
    <variation>A</variation>
    <location>
        <position position="119"/>
    </location>
</feature>
<feature type="sequence conflict" description="In Ref. 1; BAC25546." evidence="9" ref="1">
    <original>FVR</original>
    <variation>CVP</variation>
    <location>
        <begin position="162"/>
        <end position="164"/>
    </location>
</feature>
<feature type="sequence conflict" description="In Ref. 1; BAC25546." evidence="9" ref="1">
    <original>G</original>
    <variation>W</variation>
    <location>
        <position position="185"/>
    </location>
</feature>
<feature type="sequence conflict" description="In Ref. 1; BAC25546." evidence="9" ref="1">
    <original>RVKVDG</original>
    <variation>PRIVDR</variation>
    <location>
        <begin position="191"/>
        <end position="196"/>
    </location>
</feature>
<feature type="sequence conflict" description="In Ref. 1; BAC25546." evidence="9" ref="1">
    <original>SR</original>
    <variation>VC</variation>
    <location>
        <begin position="209"/>
        <end position="210"/>
    </location>
</feature>
<feature type="sequence conflict" description="In Ref. 1; BAC25546." evidence="9" ref="1">
    <original>YSP</original>
    <variation>DSR</variation>
    <location>
        <begin position="226"/>
        <end position="228"/>
    </location>
</feature>
<feature type="strand" evidence="13">
    <location>
        <begin position="122"/>
        <end position="127"/>
    </location>
</feature>
<feature type="helix" evidence="13">
    <location>
        <begin position="134"/>
        <end position="141"/>
    </location>
</feature>
<feature type="helix" evidence="13">
    <location>
        <begin position="142"/>
        <end position="144"/>
    </location>
</feature>
<feature type="strand" evidence="13">
    <location>
        <begin position="147"/>
        <end position="152"/>
    </location>
</feature>
<feature type="strand" evidence="13">
    <location>
        <begin position="156"/>
        <end position="164"/>
    </location>
</feature>
<feature type="helix" evidence="13">
    <location>
        <begin position="165"/>
        <end position="174"/>
    </location>
</feature>
<feature type="strand" evidence="13">
    <location>
        <begin position="175"/>
        <end position="181"/>
    </location>
</feature>
<feature type="strand" evidence="13">
    <location>
        <begin position="187"/>
        <end position="196"/>
    </location>
</feature>
<name>SRSF1_MOUSE</name>
<proteinExistence type="evidence at protein level"/>
<comment type="function">
    <text evidence="2 6 7">Plays a role in preventing exon skipping, ensuring the accuracy of splicing and regulating alternative splicing (PubMed:28785060). Interacts with other spliceosomal components, via the RS domains, to form a bridge between the 5'- and 3'-splice site binding components, U1 snRNP and U2AF. Can stimulate binding of U1 snRNP to a 5'-splice site-containing pre-mRNA. Binds to purine-rich RNA sequences, either the octamer, 5'-RGAAGAAC-3' (r=A or G) or the decamers, AGGACAGAGC/AGGACGAAGC. Binds preferentially to the 5'-CGAGGCG-3' motif in vitro. Three copies of the octamer constitute a powerful splicing enhancer in vitro, the ASF/SF2 splicing enhancer (ASE) which can specifically activate ASE-dependent splicing (By similarity). Specifically regulates alternative splicing of cardiac isoforms of CAMK2D, LDB3/CYPHER and TNNT2/CTNT during heart remodeling at the juvenile to adult transition. The inappropriate accumulation of a neonatal and neuronal isoform of CAMKD2 in the adult heart results in aberrant calcium handling and defective excitation-contraction coupling in cardiomyocytes. May function as export adapter involved in mRNA nuclear export through the TAP/NXF1 pathway (PubMed:15652482).</text>
</comment>
<comment type="subunit">
    <text evidence="2 7">Consists of two polypeptides of p32 and p33. Identified in the spliceosome C complex. Component of a ribonucleoprotein complex containing mRNAs and RNA-binding proteins including DDX5, HNRNPH2 and SRSF1 as well as splicing regulator ARVCF (By similarity). In vitro, self-associates and binds SRSF2, SNRNP70 and U2AF1 but not U2AF2. Binds SREK1/SFRS12. Interacts with SAFB/SAFB1. Interacts with PSIP1/LEDGF. Interacts with RSRC1 (via Arg/Ser-rich domain). Interacts with ZRSR2/U2AF1-RS2. Interacts with CCDC55 (via C-terminus). Interacts with SRPK1 and a sliding docking interaction is essential for its sequential and processive phosphorylation by SRPK1. Interacts with NXF1. Interacts with CCNL1, CCNL2 and CDK11B. Interacts with RRP1B. Interacts (when phosphorylated in its RS domain) with TNPO3; promoting nuclear import. Interacts with ILDR1 (via C-terminus) and ILDR2 (PubMed:28785060).</text>
</comment>
<comment type="interaction">
    <interactant intactId="EBI-2550360">
        <id>Q6PDM2</id>
    </interactant>
    <interactant intactId="EBI-6261031">
        <id>Q8R409</id>
        <label>Hexim1</label>
    </interactant>
    <organismsDiffer>false</organismsDiffer>
    <experiments>4</experiments>
</comment>
<comment type="interaction">
    <interactant intactId="EBI-2550360">
        <id>Q6PDM2</id>
    </interactant>
    <interactant intactId="EBI-2549849">
        <id>P08775</id>
        <label>Polr2a</label>
    </interactant>
    <organismsDiffer>false</organismsDiffer>
    <experiments>2</experiments>
</comment>
<comment type="interaction">
    <interactant intactId="EBI-2550360">
        <id>Q6PDM2</id>
    </interactant>
    <interactant intactId="EBI-299820">
        <id>P70318</id>
        <label>Tial1</label>
    </interactant>
    <organismsDiffer>false</organismsDiffer>
    <experiments>3</experiments>
</comment>
<comment type="interaction">
    <interactant intactId="EBI-2550360">
        <id>Q6PDM2</id>
    </interactant>
    <interactant intactId="EBI-523899">
        <id>P70191</id>
        <label>Traf5</label>
    </interactant>
    <organismsDiffer>false</organismsDiffer>
    <experiments>2</experiments>
</comment>
<comment type="subcellular location">
    <subcellularLocation>
        <location evidence="2">Cytoplasm</location>
    </subcellularLocation>
    <subcellularLocation>
        <location evidence="7">Nucleus speckle</location>
    </subcellularLocation>
    <text evidence="2">In nuclear speckles. Shuttles between the nucleus and the cytoplasm. Nuclear import is mediated via interaction with TNPO3.</text>
</comment>
<comment type="alternative products">
    <event type="alternative splicing"/>
    <isoform>
        <id>Q6PDM2-1</id>
        <name>1</name>
        <sequence type="displayed"/>
    </isoform>
    <isoform>
        <id>Q6PDM2-2</id>
        <name>2</name>
        <sequence type="described" ref="VSP_013770 VSP_013773"/>
    </isoform>
    <isoform>
        <id>Q6PDM2-3</id>
        <name>3</name>
        <sequence type="described" ref="VSP_013771 VSP_013772"/>
    </isoform>
</comment>
<comment type="tissue specificity">
    <text evidence="7">Expressed in inner ear.</text>
</comment>
<comment type="domain">
    <text evidence="2">The RRM 2 domain plays an important role in governing both the binding mode and the phosphorylation mechanism of the RS domain by SRPK1. RS domain and RRM 2 are uniquely positioned to initiate a highly directional (C-terminus to N-terminus) phosphorylation reaction in which the RS domain slides through an extended electronegative channel separating the docking groove of SRPK1 and the active site. RRM 2 binds toward the periphery of the active site and guides the directional phosphorylation mechanism. Both the RS domain and an RRM domain are required for nucleocytoplasmic shuttling (By similarity).</text>
</comment>
<comment type="PTM">
    <text evidence="2">Phosphorylated by CLK1, CLK2, CLK3 and CLK4. Phosphorylated by SRPK1 at multiple serines in its RS domain via a directional (C-terminal to N-terminal) and a dual-track mechanism incorporating both processive phosphorylation (in which the kinase stays attached to the substrate after each round of phosphorylation) and distributive phosphorylation steps (in which the kinase and substrate dissociate after each phosphorylation event). The RS domain of SRSF1 binds to a docking groove in the large lobe of the kinase domain of SRPK1 and this induces certain structural changes in SRPK1 and/or RRM 2 domain of SRSF1, allowing RRM 2 to bind the kinase and initiate phosphorylation. The cycles continue for several phosphorylation steps in a processive manner (steps 1-8) until the last few phosphorylation steps (approximately steps 9-12). During that time, a mechanical stress induces the unfolding of the beta-4 motif in RRM 2, which then docks at the docking groove of SRPK1. This also signals RRM 2 to begin to dissociate, which facilitates SRSF1 dissociation after phosphorylation is completed (By similarity).</text>
</comment>
<comment type="PTM">
    <text evidence="2">Asymmetrically dimethylated at arginines, probably by PRMT1, methylation promotes localization to nuclear speckles.</text>
</comment>
<comment type="miscellaneous">
    <molecule>Isoform 2</molecule>
    <text evidence="9">May be due to intron retention.</text>
</comment>
<comment type="miscellaneous">
    <molecule>Isoform 3</molecule>
    <text evidence="9">May be produced at very low levels due to a premature stop codon in the mRNA, leading to nonsense-mediated mRNA decay.</text>
</comment>
<comment type="similarity">
    <text evidence="9">Belongs to the splicing factor SR family.</text>
</comment>
<organism>
    <name type="scientific">Mus musculus</name>
    <name type="common">Mouse</name>
    <dbReference type="NCBI Taxonomy" id="10090"/>
    <lineage>
        <taxon>Eukaryota</taxon>
        <taxon>Metazoa</taxon>
        <taxon>Chordata</taxon>
        <taxon>Craniata</taxon>
        <taxon>Vertebrata</taxon>
        <taxon>Euteleostomi</taxon>
        <taxon>Mammalia</taxon>
        <taxon>Eutheria</taxon>
        <taxon>Euarchontoglires</taxon>
        <taxon>Glires</taxon>
        <taxon>Rodentia</taxon>
        <taxon>Myomorpha</taxon>
        <taxon>Muroidea</taxon>
        <taxon>Muridae</taxon>
        <taxon>Murinae</taxon>
        <taxon>Mus</taxon>
        <taxon>Mus</taxon>
    </lineage>
</organism>
<sequence length="248" mass="27745">MSGGGVIRGPAGNNDCRIYVGNLPPDIRTKDIEDVFYKYGAIRDIDLKNRRGGPPFAFVEFEDPRDAEDAVYGRDGYDYDGYRLRVEFPRSGRGTGRGGGGGGGGGAPRGRYGPPSRRSENRVVVSGLPPSGSWQDLKDHMREAGDVCYADVYRDGTGVVEFVRKEDMTYAVRKLDNTKFRSHEGETAYIRVKVDGPRSPSYGRSRSRSRSRSRSRSRSNSRSRSYSPRRSRGSPRYSPRHSRSRSRT</sequence>